<protein>
    <recommendedName>
        <fullName evidence="1">UPF0246 protein YPK_3600</fullName>
    </recommendedName>
</protein>
<comment type="similarity">
    <text evidence="1">Belongs to the UPF0246 family.</text>
</comment>
<feature type="chain" id="PRO_1000131155" description="UPF0246 protein YPK_3600">
    <location>
        <begin position="1"/>
        <end position="258"/>
    </location>
</feature>
<accession>B1JL10</accession>
<gene>
    <name type="ordered locus">YPK_3600</name>
</gene>
<sequence length="258" mass="29073">MLIIISPAKTLDYQSPLATTKFSQPEMLDKSQALIEICRELTPAQISSLMGISDKLAGLNAARFSEWQPDFTPANARQAILAFKGDVYTGMQAESFSEADFDFAQQHLRMLSGLYGLLRPLDLMQPYRLEMGTKLANPRGKDLYAFWGDQITEKLNQALELQGDNILINLASDEYFKAVKPAKLSGSLIKPVFLDEKNGKYKIISFYAKKARGLMSRFIIQNKLTKPEQLVDFNLEGYEFDAGLSAKNELVFKRAEQH</sequence>
<reference key="1">
    <citation type="submission" date="2008-02" db="EMBL/GenBank/DDBJ databases">
        <title>Complete sequence of Yersinia pseudotuberculosis YPIII.</title>
        <authorList>
            <consortium name="US DOE Joint Genome Institute"/>
            <person name="Copeland A."/>
            <person name="Lucas S."/>
            <person name="Lapidus A."/>
            <person name="Glavina del Rio T."/>
            <person name="Dalin E."/>
            <person name="Tice H."/>
            <person name="Bruce D."/>
            <person name="Goodwin L."/>
            <person name="Pitluck S."/>
            <person name="Munk A.C."/>
            <person name="Brettin T."/>
            <person name="Detter J.C."/>
            <person name="Han C."/>
            <person name="Tapia R."/>
            <person name="Schmutz J."/>
            <person name="Larimer F."/>
            <person name="Land M."/>
            <person name="Hauser L."/>
            <person name="Challacombe J.F."/>
            <person name="Green L."/>
            <person name="Lindler L.E."/>
            <person name="Nikolich M.P."/>
            <person name="Richardson P."/>
        </authorList>
    </citation>
    <scope>NUCLEOTIDE SEQUENCE [LARGE SCALE GENOMIC DNA]</scope>
    <source>
        <strain>YPIII</strain>
    </source>
</reference>
<name>Y3600_YERPY</name>
<organism>
    <name type="scientific">Yersinia pseudotuberculosis serotype O:3 (strain YPIII)</name>
    <dbReference type="NCBI Taxonomy" id="502800"/>
    <lineage>
        <taxon>Bacteria</taxon>
        <taxon>Pseudomonadati</taxon>
        <taxon>Pseudomonadota</taxon>
        <taxon>Gammaproteobacteria</taxon>
        <taxon>Enterobacterales</taxon>
        <taxon>Yersiniaceae</taxon>
        <taxon>Yersinia</taxon>
    </lineage>
</organism>
<dbReference type="EMBL" id="CP000950">
    <property type="protein sequence ID" value="ACA69867.1"/>
    <property type="molecule type" value="Genomic_DNA"/>
</dbReference>
<dbReference type="SMR" id="B1JL10"/>
<dbReference type="KEGG" id="ypy:YPK_3600"/>
<dbReference type="PATRIC" id="fig|502800.11.peg.4351"/>
<dbReference type="GO" id="GO:0005829">
    <property type="term" value="C:cytosol"/>
    <property type="evidence" value="ECO:0007669"/>
    <property type="project" value="TreeGrafter"/>
</dbReference>
<dbReference type="GO" id="GO:0033194">
    <property type="term" value="P:response to hydroperoxide"/>
    <property type="evidence" value="ECO:0007669"/>
    <property type="project" value="TreeGrafter"/>
</dbReference>
<dbReference type="HAMAP" id="MF_00652">
    <property type="entry name" value="UPF0246"/>
    <property type="match status" value="1"/>
</dbReference>
<dbReference type="InterPro" id="IPR005583">
    <property type="entry name" value="YaaA"/>
</dbReference>
<dbReference type="NCBIfam" id="NF002541">
    <property type="entry name" value="PRK02101.1-1"/>
    <property type="match status" value="1"/>
</dbReference>
<dbReference type="NCBIfam" id="NF002542">
    <property type="entry name" value="PRK02101.1-3"/>
    <property type="match status" value="1"/>
</dbReference>
<dbReference type="PANTHER" id="PTHR30283:SF4">
    <property type="entry name" value="PEROXIDE STRESS RESISTANCE PROTEIN YAAA"/>
    <property type="match status" value="1"/>
</dbReference>
<dbReference type="PANTHER" id="PTHR30283">
    <property type="entry name" value="PEROXIDE STRESS RESPONSE PROTEIN YAAA"/>
    <property type="match status" value="1"/>
</dbReference>
<dbReference type="Pfam" id="PF03883">
    <property type="entry name" value="H2O2_YaaD"/>
    <property type="match status" value="1"/>
</dbReference>
<evidence type="ECO:0000255" key="1">
    <source>
        <dbReference type="HAMAP-Rule" id="MF_00652"/>
    </source>
</evidence>
<proteinExistence type="inferred from homology"/>